<evidence type="ECO:0000250" key="1"/>
<evidence type="ECO:0000255" key="2"/>
<evidence type="ECO:0000255" key="3">
    <source>
        <dbReference type="PROSITE-ProRule" id="PRU00548"/>
    </source>
</evidence>
<evidence type="ECO:0000256" key="4">
    <source>
        <dbReference type="SAM" id="MobiDB-lite"/>
    </source>
</evidence>
<evidence type="ECO:0000305" key="5"/>
<keyword id="KW-0967">Endosome</keyword>
<keyword id="KW-0325">Glycoprotein</keyword>
<keyword id="KW-0472">Membrane</keyword>
<keyword id="KW-0653">Protein transport</keyword>
<keyword id="KW-1185">Reference proteome</keyword>
<keyword id="KW-0735">Signal-anchor</keyword>
<keyword id="KW-0812">Transmembrane</keyword>
<keyword id="KW-1133">Transmembrane helix</keyword>
<keyword id="KW-0813">Transport</keyword>
<keyword id="KW-0926">Vacuole</keyword>
<reference key="1">
    <citation type="journal article" date="2004" name="Nature">
        <title>Genome evolution in yeasts.</title>
        <authorList>
            <person name="Dujon B."/>
            <person name="Sherman D."/>
            <person name="Fischer G."/>
            <person name="Durrens P."/>
            <person name="Casaregola S."/>
            <person name="Lafontaine I."/>
            <person name="de Montigny J."/>
            <person name="Marck C."/>
            <person name="Neuveglise C."/>
            <person name="Talla E."/>
            <person name="Goffard N."/>
            <person name="Frangeul L."/>
            <person name="Aigle M."/>
            <person name="Anthouard V."/>
            <person name="Babour A."/>
            <person name="Barbe V."/>
            <person name="Barnay S."/>
            <person name="Blanchin S."/>
            <person name="Beckerich J.-M."/>
            <person name="Beyne E."/>
            <person name="Bleykasten C."/>
            <person name="Boisrame A."/>
            <person name="Boyer J."/>
            <person name="Cattolico L."/>
            <person name="Confanioleri F."/>
            <person name="de Daruvar A."/>
            <person name="Despons L."/>
            <person name="Fabre E."/>
            <person name="Fairhead C."/>
            <person name="Ferry-Dumazet H."/>
            <person name="Groppi A."/>
            <person name="Hantraye F."/>
            <person name="Hennequin C."/>
            <person name="Jauniaux N."/>
            <person name="Joyet P."/>
            <person name="Kachouri R."/>
            <person name="Kerrest A."/>
            <person name="Koszul R."/>
            <person name="Lemaire M."/>
            <person name="Lesur I."/>
            <person name="Ma L."/>
            <person name="Muller H."/>
            <person name="Nicaud J.-M."/>
            <person name="Nikolski M."/>
            <person name="Oztas S."/>
            <person name="Ozier-Kalogeropoulos O."/>
            <person name="Pellenz S."/>
            <person name="Potier S."/>
            <person name="Richard G.-F."/>
            <person name="Straub M.-L."/>
            <person name="Suleau A."/>
            <person name="Swennen D."/>
            <person name="Tekaia F."/>
            <person name="Wesolowski-Louvel M."/>
            <person name="Westhof E."/>
            <person name="Wirth B."/>
            <person name="Zeniou-Meyer M."/>
            <person name="Zivanovic Y."/>
            <person name="Bolotin-Fukuhara M."/>
            <person name="Thierry A."/>
            <person name="Bouchier C."/>
            <person name="Caudron B."/>
            <person name="Scarpelli C."/>
            <person name="Gaillardin C."/>
            <person name="Weissenbach J."/>
            <person name="Wincker P."/>
            <person name="Souciet J.-L."/>
        </authorList>
    </citation>
    <scope>NUCLEOTIDE SEQUENCE [LARGE SCALE GENOMIC DNA]</scope>
    <source>
        <strain>ATCC 8585 / CBS 2359 / DSM 70799 / NBRC 1267 / NRRL Y-1140 / WM37</strain>
    </source>
</reference>
<organism>
    <name type="scientific">Kluyveromyces lactis (strain ATCC 8585 / CBS 2359 / DSM 70799 / NBRC 1267 / NRRL Y-1140 / WM37)</name>
    <name type="common">Yeast</name>
    <name type="synonym">Candida sphaerica</name>
    <dbReference type="NCBI Taxonomy" id="284590"/>
    <lineage>
        <taxon>Eukaryota</taxon>
        <taxon>Fungi</taxon>
        <taxon>Dikarya</taxon>
        <taxon>Ascomycota</taxon>
        <taxon>Saccharomycotina</taxon>
        <taxon>Saccharomycetes</taxon>
        <taxon>Saccharomycetales</taxon>
        <taxon>Saccharomycetaceae</taxon>
        <taxon>Kluyveromyces</taxon>
    </lineage>
</organism>
<sequence length="542" mass="60139">MGLIVLQDGFPNDRPIQGFPSDPVVRVPDDTIPADDAFSLMFLISLSITFGLLLLVLILISIYLTFCGGNDGDDSDDEDEDGTSVSFKFFRKRNSLLLDSSFMTPGKFDDDESLKVREAKELPKMSSFEVELYERTKEFQKMSPPMVKPLGSFLNSQDKQVIKDRGIQSYFFLPSINDNVDINGAFLPSFFVEDKLNVSFTKFNISSSAIMNYPLPMNKKDAVYFEVKVYKFKTCSNSIFSIGLMTCPYPYFRIPGTAAYSIAYESTGKLRINNAFGADTLLPKLEEGDVVGFGYRYSSGTIFITHNGKKMMDVTHKVGIDLFVGLGAMNAAYTRTYTKDGLFEDPDNVSFRQKWSELQAFNNGESSSDYIDARNVISKDLLQVHDPKEDTVSSDNIELHVNLGQLGFVFIEANVKKYAFGSVYGDIGIPPAYNGDDIKQDMLLQKGDELPPEYPDDAVDFFGDIHSPASTSEPPSATFSAGLPMDNAADTPVSTADADADADADADEEEPLISVKKPAAQTHSKKNNKKKKKKKSNRNRRG</sequence>
<protein>
    <recommendedName>
        <fullName>Protein SSH4</fullName>
    </recommendedName>
</protein>
<comment type="function">
    <text evidence="1">Components of the endosome-vacuole trafficking pathway that regulates nutrient transport. May be involved in processes which determine whether plasma membrane proteins are degraded or routed to the plasma membrane (By similarity).</text>
</comment>
<comment type="subcellular location">
    <subcellularLocation>
        <location evidence="1">Vacuole membrane</location>
        <topology evidence="1">Single-pass type II membrane protein</topology>
    </subcellularLocation>
    <subcellularLocation>
        <location evidence="1">Endosome membrane</location>
        <topology evidence="1">Single-pass type II membrane protein</topology>
    </subcellularLocation>
</comment>
<comment type="similarity">
    <text evidence="5">Belongs to the SSH4 family.</text>
</comment>
<dbReference type="EMBL" id="CR382122">
    <property type="protein sequence ID" value="CAH02492.1"/>
    <property type="molecule type" value="Genomic_DNA"/>
</dbReference>
<dbReference type="RefSeq" id="XP_452099.1">
    <property type="nucleotide sequence ID" value="XM_452099.1"/>
</dbReference>
<dbReference type="FunCoup" id="Q6CVE0">
    <property type="interactions" value="40"/>
</dbReference>
<dbReference type="STRING" id="284590.Q6CVE0"/>
<dbReference type="GlyCosmos" id="Q6CVE0">
    <property type="glycosylation" value="3 sites, No reported glycans"/>
</dbReference>
<dbReference type="PaxDb" id="284590-Q6CVE0"/>
<dbReference type="KEGG" id="kla:KLLA0_B12760g"/>
<dbReference type="eggNOG" id="KOG1477">
    <property type="taxonomic scope" value="Eukaryota"/>
</dbReference>
<dbReference type="HOGENOM" id="CLU_026177_0_0_1"/>
<dbReference type="InParanoid" id="Q6CVE0"/>
<dbReference type="OMA" id="FIKDRGI"/>
<dbReference type="Proteomes" id="UP000000598">
    <property type="component" value="Chromosome B"/>
</dbReference>
<dbReference type="GO" id="GO:0010008">
    <property type="term" value="C:endosome membrane"/>
    <property type="evidence" value="ECO:0007669"/>
    <property type="project" value="UniProtKB-SubCell"/>
</dbReference>
<dbReference type="GO" id="GO:0005774">
    <property type="term" value="C:vacuolar membrane"/>
    <property type="evidence" value="ECO:0007669"/>
    <property type="project" value="UniProtKB-SubCell"/>
</dbReference>
<dbReference type="GO" id="GO:0015031">
    <property type="term" value="P:protein transport"/>
    <property type="evidence" value="ECO:0007669"/>
    <property type="project" value="UniProtKB-KW"/>
</dbReference>
<dbReference type="Gene3D" id="2.60.120.920">
    <property type="match status" value="1"/>
</dbReference>
<dbReference type="InterPro" id="IPR001870">
    <property type="entry name" value="B30.2/SPRY"/>
</dbReference>
<dbReference type="InterPro" id="IPR043136">
    <property type="entry name" value="B30.2/SPRY_sf"/>
</dbReference>
<dbReference type="InterPro" id="IPR013320">
    <property type="entry name" value="ConA-like_dom_sf"/>
</dbReference>
<dbReference type="InterPro" id="IPR003877">
    <property type="entry name" value="SPRY_dom"/>
</dbReference>
<dbReference type="InterPro" id="IPR050618">
    <property type="entry name" value="Ubq-SigPath_Reg"/>
</dbReference>
<dbReference type="PANTHER" id="PTHR12864">
    <property type="entry name" value="RAN BINDING PROTEIN 9-RELATED"/>
    <property type="match status" value="1"/>
</dbReference>
<dbReference type="Pfam" id="PF00622">
    <property type="entry name" value="SPRY"/>
    <property type="match status" value="1"/>
</dbReference>
<dbReference type="SMART" id="SM00449">
    <property type="entry name" value="SPRY"/>
    <property type="match status" value="1"/>
</dbReference>
<dbReference type="SUPFAM" id="SSF49899">
    <property type="entry name" value="Concanavalin A-like lectins/glucanases"/>
    <property type="match status" value="1"/>
</dbReference>
<dbReference type="PROSITE" id="PS50188">
    <property type="entry name" value="B302_SPRY"/>
    <property type="match status" value="1"/>
</dbReference>
<accession>Q6CVE0</accession>
<feature type="chain" id="PRO_0000324482" description="Protein SSH4">
    <location>
        <begin position="1"/>
        <end position="542"/>
    </location>
</feature>
<feature type="topological domain" description="Cytoplasmic" evidence="2">
    <location>
        <begin position="1"/>
        <end position="39"/>
    </location>
</feature>
<feature type="transmembrane region" description="Helical; Signal-anchor for type II membrane protein" evidence="2">
    <location>
        <begin position="40"/>
        <end position="60"/>
    </location>
</feature>
<feature type="topological domain" description="Lumenal" evidence="2">
    <location>
        <begin position="61"/>
        <end position="542"/>
    </location>
</feature>
<feature type="domain" description="B30.2/SPRY" evidence="3">
    <location>
        <begin position="158"/>
        <end position="345"/>
    </location>
</feature>
<feature type="region of interest" description="Disordered" evidence="4">
    <location>
        <begin position="447"/>
        <end position="542"/>
    </location>
</feature>
<feature type="compositionally biased region" description="Acidic residues" evidence="4">
    <location>
        <begin position="450"/>
        <end position="459"/>
    </location>
</feature>
<feature type="compositionally biased region" description="Low complexity" evidence="4">
    <location>
        <begin position="467"/>
        <end position="481"/>
    </location>
</feature>
<feature type="compositionally biased region" description="Acidic residues" evidence="4">
    <location>
        <begin position="498"/>
        <end position="511"/>
    </location>
</feature>
<feature type="compositionally biased region" description="Basic residues" evidence="4">
    <location>
        <begin position="523"/>
        <end position="542"/>
    </location>
</feature>
<feature type="glycosylation site" description="N-linked (GlcNAc...) asparagine" evidence="2">
    <location>
        <position position="197"/>
    </location>
</feature>
<feature type="glycosylation site" description="N-linked (GlcNAc...) asparagine" evidence="2">
    <location>
        <position position="204"/>
    </location>
</feature>
<feature type="glycosylation site" description="N-linked (GlcNAc...) asparagine" evidence="2">
    <location>
        <position position="348"/>
    </location>
</feature>
<gene>
    <name type="primary">SSH4</name>
    <name type="ordered locus">KLLA0B12760g</name>
</gene>
<proteinExistence type="inferred from homology"/>
<name>SSH4_KLULA</name>